<protein>
    <recommendedName>
        <fullName>Integrator complex subunit 12</fullName>
        <shortName>Int12</shortName>
    </recommendedName>
</protein>
<accession>Q6DJM6</accession>
<organism>
    <name type="scientific">Xenopus laevis</name>
    <name type="common">African clawed frog</name>
    <dbReference type="NCBI Taxonomy" id="8355"/>
    <lineage>
        <taxon>Eukaryota</taxon>
        <taxon>Metazoa</taxon>
        <taxon>Chordata</taxon>
        <taxon>Craniata</taxon>
        <taxon>Vertebrata</taxon>
        <taxon>Euteleostomi</taxon>
        <taxon>Amphibia</taxon>
        <taxon>Batrachia</taxon>
        <taxon>Anura</taxon>
        <taxon>Pipoidea</taxon>
        <taxon>Pipidae</taxon>
        <taxon>Xenopodinae</taxon>
        <taxon>Xenopus</taxon>
        <taxon>Xenopus</taxon>
    </lineage>
</organism>
<reference key="1">
    <citation type="submission" date="2004-06" db="EMBL/GenBank/DDBJ databases">
        <authorList>
            <consortium name="NIH - Xenopus Gene Collection (XGC) project"/>
        </authorList>
    </citation>
    <scope>NUCLEOTIDE SEQUENCE [LARGE SCALE MRNA]</scope>
    <source>
        <tissue>Kidney</tissue>
    </source>
</reference>
<proteinExistence type="evidence at transcript level"/>
<feature type="chain" id="PRO_0000259571" description="Integrator complex subunit 12">
    <location>
        <begin position="1"/>
        <end position="464"/>
    </location>
</feature>
<feature type="zinc finger region" description="PHD-type" evidence="2">
    <location>
        <begin position="156"/>
        <end position="212"/>
    </location>
</feature>
<feature type="region of interest" description="Disordered" evidence="3">
    <location>
        <begin position="42"/>
        <end position="98"/>
    </location>
</feature>
<feature type="region of interest" description="Disordered" evidence="3">
    <location>
        <begin position="216"/>
        <end position="252"/>
    </location>
</feature>
<feature type="region of interest" description="Disordered" evidence="3">
    <location>
        <begin position="312"/>
        <end position="445"/>
    </location>
</feature>
<feature type="compositionally biased region" description="Low complexity" evidence="3">
    <location>
        <begin position="69"/>
        <end position="84"/>
    </location>
</feature>
<feature type="compositionally biased region" description="Basic and acidic residues" evidence="3">
    <location>
        <begin position="85"/>
        <end position="98"/>
    </location>
</feature>
<feature type="compositionally biased region" description="Low complexity" evidence="3">
    <location>
        <begin position="227"/>
        <end position="239"/>
    </location>
</feature>
<feature type="compositionally biased region" description="Polar residues" evidence="3">
    <location>
        <begin position="312"/>
        <end position="329"/>
    </location>
</feature>
<feature type="compositionally biased region" description="Low complexity" evidence="3">
    <location>
        <begin position="339"/>
        <end position="371"/>
    </location>
</feature>
<feature type="compositionally biased region" description="Polar residues" evidence="3">
    <location>
        <begin position="372"/>
        <end position="382"/>
    </location>
</feature>
<feature type="compositionally biased region" description="Low complexity" evidence="3">
    <location>
        <begin position="384"/>
        <end position="421"/>
    </location>
</feature>
<feature type="compositionally biased region" description="Polar residues" evidence="3">
    <location>
        <begin position="428"/>
        <end position="445"/>
    </location>
</feature>
<comment type="function">
    <text evidence="1">Component of the integrator complex, a multiprotein complex that terminates RNA polymerase II (Pol II) transcription in the promoter-proximal region of genes. The integrator complex provides a quality checkpoint during transcription elongation by driving premature transcription termination of transcripts that are unfavorably configured for transcriptional elongation: the complex terminates transcription by (1) catalyzing dephosphorylation of the C-terminal domain (CTD) of Pol II subunit POLR2A/RPB1 and SUPT5H/SPT5, (2) degrading the exiting nascent RNA transcript via endonuclease activity and (3) promoting the release of Pol II from bound DNA. The integrator complex is also involved in terminating the synthesis of non-coding Pol II transcripts, such as enhancer RNAs (eRNAs), small nuclear RNAs (snRNAs), telomerase RNAs and long non-coding RNAs (lncRNAs).</text>
</comment>
<comment type="subunit">
    <text evidence="1">Component of the Integrator complex, composed of core subunits INTS1, INTS2, INTS3, INTS4, INTS5, INTS6, INTS7, INTS8, INTS9/RC74, INTS10, INTS11/CPSF3L, INTS12, INTS13, INTS14 and INTS15. The core complex associates with protein phosphatase 2A subunits PPP2CA and PPP2R1A, to form the Integrator-PP2A (INTAC) complex.</text>
</comment>
<comment type="subcellular location">
    <subcellularLocation>
        <location evidence="1">Nucleus</location>
    </subcellularLocation>
</comment>
<comment type="similarity">
    <text evidence="4">Belongs to the Integrator subunit 12 family.</text>
</comment>
<sequence>MAVTINTELDPVFLKALGYLHSKSKDSAEKLKALLDESLCKGNDSVYRPQPKEVEQPKAMLSKVKPETKASSSTPSSSILSKPLASEKVKKEAEKRTADKMKVEINDIMDIPKKPRIEKTEARSSPVTVQLSKDLPVPDLSSFEETSADDFAMEMGLACVVCRQMTVFSGNQLVECQECHNLYHQDCHRPQVTDKDVNDPRLVWYCARCTRQMKRMAQKNQKPSQKPAPSAVSAVTPVAKDPSVNKPELKSKSDSANTFLAFKRAEVKASSAVSSNPSNSGVSSSSASGLTGWAAFGAKTASAVPVSGKLGTNSQATSGKPPSLSSVQKAGTVPGLTPSKAGSVSKSGSGGSSSTIPLKPLPPLILGKTGLSRSMSSDNVSKTGLPSPNPSSSGSVSSLSSQLGSNNGSSNTAGSNVNSSNKVAVDPSMQQSGAKGPTSQESQLNAMKRLQMVKKKAAQKKLKK</sequence>
<name>INT12_XENLA</name>
<gene>
    <name type="primary">ints12</name>
</gene>
<keyword id="KW-0479">Metal-binding</keyword>
<keyword id="KW-0539">Nucleus</keyword>
<keyword id="KW-1185">Reference proteome</keyword>
<keyword id="KW-0862">Zinc</keyword>
<keyword id="KW-0863">Zinc-finger</keyword>
<dbReference type="EMBL" id="BC075149">
    <property type="protein sequence ID" value="AAH75149.1"/>
    <property type="molecule type" value="mRNA"/>
</dbReference>
<dbReference type="RefSeq" id="NP_001086353.1">
    <property type="nucleotide sequence ID" value="NM_001092884.1"/>
</dbReference>
<dbReference type="RefSeq" id="XP_018092689.1">
    <property type="nucleotide sequence ID" value="XM_018237200.1"/>
</dbReference>
<dbReference type="RefSeq" id="XP_018092694.1">
    <property type="nucleotide sequence ID" value="XM_018237205.1"/>
</dbReference>
<dbReference type="SMR" id="Q6DJM6"/>
<dbReference type="DNASU" id="444782"/>
<dbReference type="GeneID" id="444782"/>
<dbReference type="KEGG" id="xla:444782"/>
<dbReference type="AGR" id="Xenbase:XB-GENE-977208"/>
<dbReference type="CTD" id="444782"/>
<dbReference type="Xenbase" id="XB-GENE-977208">
    <property type="gene designation" value="ints12.S"/>
</dbReference>
<dbReference type="OMA" id="QECHCLY"/>
<dbReference type="OrthoDB" id="5846437at2759"/>
<dbReference type="Proteomes" id="UP000186698">
    <property type="component" value="Chromosome 1S"/>
</dbReference>
<dbReference type="Bgee" id="444782">
    <property type="expression patterns" value="Expressed in testis and 19 other cell types or tissues"/>
</dbReference>
<dbReference type="GO" id="GO:0160232">
    <property type="term" value="C:INTAC complex"/>
    <property type="evidence" value="ECO:0000250"/>
    <property type="project" value="UniProtKB"/>
</dbReference>
<dbReference type="GO" id="GO:0032039">
    <property type="term" value="C:integrator complex"/>
    <property type="evidence" value="ECO:0000318"/>
    <property type="project" value="GO_Central"/>
</dbReference>
<dbReference type="GO" id="GO:0008270">
    <property type="term" value="F:zinc ion binding"/>
    <property type="evidence" value="ECO:0007669"/>
    <property type="project" value="UniProtKB-KW"/>
</dbReference>
<dbReference type="GO" id="GO:0160240">
    <property type="term" value="P:RNA polymerase II transcription initiation surveillance"/>
    <property type="evidence" value="ECO:0000250"/>
    <property type="project" value="UniProtKB"/>
</dbReference>
<dbReference type="GO" id="GO:0034472">
    <property type="term" value="P:snRNA 3'-end processing"/>
    <property type="evidence" value="ECO:0000318"/>
    <property type="project" value="GO_Central"/>
</dbReference>
<dbReference type="CDD" id="cd15501">
    <property type="entry name" value="PHD_Int12"/>
    <property type="match status" value="1"/>
</dbReference>
<dbReference type="FunFam" id="3.30.40.10:FF:000101">
    <property type="entry name" value="Integrator complex subunit 12"/>
    <property type="match status" value="1"/>
</dbReference>
<dbReference type="Gene3D" id="3.30.40.10">
    <property type="entry name" value="Zinc/RING finger domain, C3HC4 (zinc finger)"/>
    <property type="match status" value="1"/>
</dbReference>
<dbReference type="InterPro" id="IPR039054">
    <property type="entry name" value="Int12_PHD"/>
</dbReference>
<dbReference type="InterPro" id="IPR051776">
    <property type="entry name" value="Integrator_subunit_12"/>
</dbReference>
<dbReference type="InterPro" id="IPR019786">
    <property type="entry name" value="Zinc_finger_PHD-type_CS"/>
</dbReference>
<dbReference type="InterPro" id="IPR011011">
    <property type="entry name" value="Znf_FYVE_PHD"/>
</dbReference>
<dbReference type="InterPro" id="IPR001965">
    <property type="entry name" value="Znf_PHD"/>
</dbReference>
<dbReference type="InterPro" id="IPR019787">
    <property type="entry name" value="Znf_PHD-finger"/>
</dbReference>
<dbReference type="InterPro" id="IPR013083">
    <property type="entry name" value="Znf_RING/FYVE/PHD"/>
</dbReference>
<dbReference type="PANTHER" id="PTHR13415:SF2">
    <property type="entry name" value="INTEGRATOR COMPLEX SUBUNIT 12"/>
    <property type="match status" value="1"/>
</dbReference>
<dbReference type="PANTHER" id="PTHR13415">
    <property type="entry name" value="NUCLEAR FACTOR-RELATED"/>
    <property type="match status" value="1"/>
</dbReference>
<dbReference type="Pfam" id="PF00628">
    <property type="entry name" value="PHD"/>
    <property type="match status" value="1"/>
</dbReference>
<dbReference type="SMART" id="SM00249">
    <property type="entry name" value="PHD"/>
    <property type="match status" value="1"/>
</dbReference>
<dbReference type="SUPFAM" id="SSF57903">
    <property type="entry name" value="FYVE/PHD zinc finger"/>
    <property type="match status" value="1"/>
</dbReference>
<dbReference type="PROSITE" id="PS01359">
    <property type="entry name" value="ZF_PHD_1"/>
    <property type="match status" value="1"/>
</dbReference>
<dbReference type="PROSITE" id="PS50016">
    <property type="entry name" value="ZF_PHD_2"/>
    <property type="match status" value="1"/>
</dbReference>
<evidence type="ECO:0000250" key="1">
    <source>
        <dbReference type="UniProtKB" id="Q96CB8"/>
    </source>
</evidence>
<evidence type="ECO:0000255" key="2">
    <source>
        <dbReference type="PROSITE-ProRule" id="PRU00146"/>
    </source>
</evidence>
<evidence type="ECO:0000256" key="3">
    <source>
        <dbReference type="SAM" id="MobiDB-lite"/>
    </source>
</evidence>
<evidence type="ECO:0000305" key="4"/>